<accession>Q5XI13</accession>
<name>GRWD1_RAT</name>
<gene>
    <name type="primary">Grwd1</name>
</gene>
<proteinExistence type="evidence at transcript level"/>
<evidence type="ECO:0000250" key="1">
    <source>
        <dbReference type="UniProtKB" id="Q9BQ67"/>
    </source>
</evidence>
<evidence type="ECO:0000256" key="2">
    <source>
        <dbReference type="SAM" id="MobiDB-lite"/>
    </source>
</evidence>
<comment type="function">
    <text evidence="1">Histone binding-protein that regulates chromatin dynamics and minichromosome maintenance (MCM) loading at replication origins, possibly by promoting chromatin openness.</text>
</comment>
<comment type="subunit">
    <text evidence="1">Interacts with METTL18. Interacts with CDT1; origin binding of GRWD1 is dependent on CDT1. Interacts with CDC6; origin binding of GRWD1 is dependent on CDC6. Binds to histone H2A-H2B and H3-H4 complexes.</text>
</comment>
<comment type="subcellular location">
    <subcellularLocation>
        <location evidence="1">Nucleus</location>
        <location evidence="1">Nucleolus</location>
    </subcellularLocation>
    <subcellularLocation>
        <location evidence="1">Nucleus</location>
    </subcellularLocation>
    <subcellularLocation>
        <location evidence="1">Chromosome</location>
    </subcellularLocation>
    <text evidence="1">Present in the nucleus throughout interphase and is detached from chromatin at the onset of mitosis and rebinds at telophase when the pre-replication complexes (pre-RC) is formed.</text>
</comment>
<keyword id="KW-0158">Chromosome</keyword>
<keyword id="KW-0539">Nucleus</keyword>
<keyword id="KW-0597">Phosphoprotein</keyword>
<keyword id="KW-1185">Reference proteome</keyword>
<keyword id="KW-0677">Repeat</keyword>
<keyword id="KW-0853">WD repeat</keyword>
<protein>
    <recommendedName>
        <fullName>Glutamate-rich WD repeat-containing protein 1</fullName>
    </recommendedName>
</protein>
<feature type="chain" id="PRO_0000051013" description="Glutamate-rich WD repeat-containing protein 1">
    <location>
        <begin position="1"/>
        <end position="445"/>
    </location>
</feature>
<feature type="repeat" description="WD 1">
    <location>
        <begin position="211"/>
        <end position="251"/>
    </location>
</feature>
<feature type="repeat" description="WD 2">
    <location>
        <begin position="258"/>
        <end position="298"/>
    </location>
</feature>
<feature type="repeat" description="WD 3">
    <location>
        <begin position="305"/>
        <end position="344"/>
    </location>
</feature>
<feature type="repeat" description="WD 4">
    <location>
        <begin position="350"/>
        <end position="390"/>
    </location>
</feature>
<feature type="repeat" description="WD 5">
    <location>
        <begin position="411"/>
        <end position="444"/>
    </location>
</feature>
<feature type="region of interest" description="Disordered" evidence="2">
    <location>
        <begin position="110"/>
        <end position="141"/>
    </location>
</feature>
<feature type="compositionally biased region" description="Acidic residues" evidence="2">
    <location>
        <begin position="121"/>
        <end position="134"/>
    </location>
</feature>
<feature type="modified residue" description="Phosphothreonine" evidence="1">
    <location>
        <position position="10"/>
    </location>
</feature>
<feature type="modified residue" description="Phosphoserine" evidence="1">
    <location>
        <position position="119"/>
    </location>
</feature>
<feature type="modified residue" description="Phosphoserine" evidence="1">
    <location>
        <position position="122"/>
    </location>
</feature>
<feature type="modified residue" description="Phosphoserine" evidence="1">
    <location>
        <position position="343"/>
    </location>
</feature>
<sequence>MAARKGRRHTCETGEPMEAETYDLGSEGPSQVYLPGRGPPLGEGEELVMDEEAYVLYHRAQTGAPCLSFDIVRDHLGDNRTELPLSLYLCAGTQAESAQSNRLMMLRMHNLHGTRPPPSEGSDDEDDEDEEDEEERKPQLELAMVPHYGGINRVRVSWLGEEPVAGVWSEKGQVEVFALRRLLQVVDDPQALAIFLRDEQARVKPIFSFAGHMGEGFALDWSPRVPGRLLTGDCQKNIHLWTPTDGGSWNVDQRPFVGHTRSVEDLQWSPTEDTVFASCSADASIRIWDIRAAPGKACMLTTAAAHDGDVNVISWSRREPFLLSGGDDGTLKVWDLRQFKSGSPVATFKQHVAPVTSVEWHPQDSGVFAASGADNQITQWDLAVERDPESGETETDPGLAALPQQLLFVHQGETDLKELHWHPQCPGVLISTALSGFTVFRTISV</sequence>
<dbReference type="EMBL" id="BC083883">
    <property type="protein sequence ID" value="AAH83883.1"/>
    <property type="molecule type" value="mRNA"/>
</dbReference>
<dbReference type="RefSeq" id="NP_001012067.1">
    <property type="nucleotide sequence ID" value="NM_001012067.1"/>
</dbReference>
<dbReference type="SMR" id="Q5XI13"/>
<dbReference type="FunCoup" id="Q5XI13">
    <property type="interactions" value="2135"/>
</dbReference>
<dbReference type="STRING" id="10116.ENSRNOP00000053027"/>
<dbReference type="PhosphoSitePlus" id="Q5XI13"/>
<dbReference type="jPOST" id="Q5XI13"/>
<dbReference type="PaxDb" id="10116-ENSRNOP00000053027"/>
<dbReference type="GeneID" id="308592"/>
<dbReference type="KEGG" id="rno:308592"/>
<dbReference type="UCSC" id="RGD:1310649">
    <property type="organism name" value="rat"/>
</dbReference>
<dbReference type="AGR" id="RGD:1310649"/>
<dbReference type="CTD" id="83743"/>
<dbReference type="RGD" id="1310649">
    <property type="gene designation" value="Grwd1"/>
</dbReference>
<dbReference type="eggNOG" id="KOG0302">
    <property type="taxonomic scope" value="Eukaryota"/>
</dbReference>
<dbReference type="HOGENOM" id="CLU_025272_1_1_1"/>
<dbReference type="InParanoid" id="Q5XI13"/>
<dbReference type="OrthoDB" id="16792at9989"/>
<dbReference type="PhylomeDB" id="Q5XI13"/>
<dbReference type="PRO" id="PR:Q5XI13"/>
<dbReference type="Proteomes" id="UP000002494">
    <property type="component" value="Unplaced"/>
</dbReference>
<dbReference type="GO" id="GO:0005694">
    <property type="term" value="C:chromosome"/>
    <property type="evidence" value="ECO:0007669"/>
    <property type="project" value="UniProtKB-SubCell"/>
</dbReference>
<dbReference type="GO" id="GO:0005730">
    <property type="term" value="C:nucleolus"/>
    <property type="evidence" value="ECO:0000318"/>
    <property type="project" value="GO_Central"/>
</dbReference>
<dbReference type="GO" id="GO:0005634">
    <property type="term" value="C:nucleus"/>
    <property type="evidence" value="ECO:0000250"/>
    <property type="project" value="UniProtKB"/>
</dbReference>
<dbReference type="GO" id="GO:0032991">
    <property type="term" value="C:protein-containing complex"/>
    <property type="evidence" value="ECO:0000266"/>
    <property type="project" value="RGD"/>
</dbReference>
<dbReference type="GO" id="GO:0003682">
    <property type="term" value="F:chromatin binding"/>
    <property type="evidence" value="ECO:0000250"/>
    <property type="project" value="UniProtKB"/>
</dbReference>
<dbReference type="GO" id="GO:0003688">
    <property type="term" value="F:DNA replication origin binding"/>
    <property type="evidence" value="ECO:0000250"/>
    <property type="project" value="UniProtKB"/>
</dbReference>
<dbReference type="GO" id="GO:0042393">
    <property type="term" value="F:histone binding"/>
    <property type="evidence" value="ECO:0000250"/>
    <property type="project" value="UniProtKB"/>
</dbReference>
<dbReference type="GO" id="GO:0006260">
    <property type="term" value="P:DNA replication"/>
    <property type="evidence" value="ECO:0000250"/>
    <property type="project" value="UniProtKB"/>
</dbReference>
<dbReference type="GO" id="GO:0006334">
    <property type="term" value="P:nucleosome assembly"/>
    <property type="evidence" value="ECO:0000250"/>
    <property type="project" value="UniProtKB"/>
</dbReference>
<dbReference type="GO" id="GO:0006337">
    <property type="term" value="P:nucleosome disassembly"/>
    <property type="evidence" value="ECO:0000250"/>
    <property type="project" value="UniProtKB"/>
</dbReference>
<dbReference type="GO" id="GO:0042254">
    <property type="term" value="P:ribosome biogenesis"/>
    <property type="evidence" value="ECO:0000318"/>
    <property type="project" value="GO_Central"/>
</dbReference>
<dbReference type="FunFam" id="2.130.10.10:FF:000332">
    <property type="entry name" value="glutamate-rich WD repeat-containing protein 1"/>
    <property type="match status" value="1"/>
</dbReference>
<dbReference type="Gene3D" id="2.130.10.10">
    <property type="entry name" value="YVTN repeat-like/Quinoprotein amine dehydrogenase"/>
    <property type="match status" value="1"/>
</dbReference>
<dbReference type="InterPro" id="IPR020472">
    <property type="entry name" value="G-protein_beta_WD-40_rep"/>
</dbReference>
<dbReference type="InterPro" id="IPR051972">
    <property type="entry name" value="Glutamate-rich_WD_repeat"/>
</dbReference>
<dbReference type="InterPro" id="IPR022052">
    <property type="entry name" value="Histone-bd_RBBP4-like_N"/>
</dbReference>
<dbReference type="InterPro" id="IPR015943">
    <property type="entry name" value="WD40/YVTN_repeat-like_dom_sf"/>
</dbReference>
<dbReference type="InterPro" id="IPR019775">
    <property type="entry name" value="WD40_repeat_CS"/>
</dbReference>
<dbReference type="InterPro" id="IPR036322">
    <property type="entry name" value="WD40_repeat_dom_sf"/>
</dbReference>
<dbReference type="InterPro" id="IPR001680">
    <property type="entry name" value="WD40_rpt"/>
</dbReference>
<dbReference type="PANTHER" id="PTHR45903">
    <property type="entry name" value="GLUTAMATE-RICH WD REPEAT-CONTAINING PROTEIN 1"/>
    <property type="match status" value="1"/>
</dbReference>
<dbReference type="PANTHER" id="PTHR45903:SF1">
    <property type="entry name" value="GLUTAMATE-RICH WD REPEAT-CONTAINING PROTEIN 1"/>
    <property type="match status" value="1"/>
</dbReference>
<dbReference type="Pfam" id="PF12265">
    <property type="entry name" value="CAF1C_H4-bd"/>
    <property type="match status" value="1"/>
</dbReference>
<dbReference type="Pfam" id="PF00400">
    <property type="entry name" value="WD40"/>
    <property type="match status" value="3"/>
</dbReference>
<dbReference type="PRINTS" id="PR00320">
    <property type="entry name" value="GPROTEINBRPT"/>
</dbReference>
<dbReference type="SMART" id="SM00320">
    <property type="entry name" value="WD40"/>
    <property type="match status" value="4"/>
</dbReference>
<dbReference type="SUPFAM" id="SSF50978">
    <property type="entry name" value="WD40 repeat-like"/>
    <property type="match status" value="1"/>
</dbReference>
<dbReference type="PROSITE" id="PS00678">
    <property type="entry name" value="WD_REPEATS_1"/>
    <property type="match status" value="1"/>
</dbReference>
<dbReference type="PROSITE" id="PS50082">
    <property type="entry name" value="WD_REPEATS_2"/>
    <property type="match status" value="3"/>
</dbReference>
<dbReference type="PROSITE" id="PS50294">
    <property type="entry name" value="WD_REPEATS_REGION"/>
    <property type="match status" value="1"/>
</dbReference>
<organism>
    <name type="scientific">Rattus norvegicus</name>
    <name type="common">Rat</name>
    <dbReference type="NCBI Taxonomy" id="10116"/>
    <lineage>
        <taxon>Eukaryota</taxon>
        <taxon>Metazoa</taxon>
        <taxon>Chordata</taxon>
        <taxon>Craniata</taxon>
        <taxon>Vertebrata</taxon>
        <taxon>Euteleostomi</taxon>
        <taxon>Mammalia</taxon>
        <taxon>Eutheria</taxon>
        <taxon>Euarchontoglires</taxon>
        <taxon>Glires</taxon>
        <taxon>Rodentia</taxon>
        <taxon>Myomorpha</taxon>
        <taxon>Muroidea</taxon>
        <taxon>Muridae</taxon>
        <taxon>Murinae</taxon>
        <taxon>Rattus</taxon>
    </lineage>
</organism>
<reference key="1">
    <citation type="journal article" date="2004" name="Genome Res.">
        <title>The status, quality, and expansion of the NIH full-length cDNA project: the Mammalian Gene Collection (MGC).</title>
        <authorList>
            <consortium name="The MGC Project Team"/>
        </authorList>
    </citation>
    <scope>NUCLEOTIDE SEQUENCE [LARGE SCALE MRNA]</scope>
    <source>
        <tissue>Testis</tissue>
    </source>
</reference>